<proteinExistence type="inferred from homology"/>
<organism>
    <name type="scientific">Shewanella loihica (strain ATCC BAA-1088 / PV-4)</name>
    <dbReference type="NCBI Taxonomy" id="323850"/>
    <lineage>
        <taxon>Bacteria</taxon>
        <taxon>Pseudomonadati</taxon>
        <taxon>Pseudomonadota</taxon>
        <taxon>Gammaproteobacteria</taxon>
        <taxon>Alteromonadales</taxon>
        <taxon>Shewanellaceae</taxon>
        <taxon>Shewanella</taxon>
    </lineage>
</organism>
<comment type="function">
    <text evidence="1">Formation of pseudouridine at positions 38, 39 and 40 in the anticodon stem and loop of transfer RNAs.</text>
</comment>
<comment type="catalytic activity">
    <reaction evidence="1">
        <text>uridine(38/39/40) in tRNA = pseudouridine(38/39/40) in tRNA</text>
        <dbReference type="Rhea" id="RHEA:22376"/>
        <dbReference type="Rhea" id="RHEA-COMP:10085"/>
        <dbReference type="Rhea" id="RHEA-COMP:10087"/>
        <dbReference type="ChEBI" id="CHEBI:65314"/>
        <dbReference type="ChEBI" id="CHEBI:65315"/>
        <dbReference type="EC" id="5.4.99.12"/>
    </reaction>
</comment>
<comment type="subunit">
    <text evidence="1">Homodimer.</text>
</comment>
<comment type="similarity">
    <text evidence="1">Belongs to the tRNA pseudouridine synthase TruA family.</text>
</comment>
<evidence type="ECO:0000255" key="1">
    <source>
        <dbReference type="HAMAP-Rule" id="MF_00171"/>
    </source>
</evidence>
<sequence length="261" mass="29487">MRVALGIEYDGSRYFGWQRQAEVDSVQAQLERALSFVANEPISIQCAGRTDAGVHATGQVVHFETNAVRKESAWTLGVNVNLPDDIAVRWAKDVDDEFHARFTATARRYRYMIYNHQFRPGILRSGVSHYPGQIDEAKMHEAAQFLLGEQDFTSFRAIQCQSNTPFRCVHEVNVTRQGMYICVDIKANAFLHHMVRNIVGSLLEVGYGRQPVSWIKELLALKDRTQAAATAKPNGLYLVDVTYPEHYALPKLALGPLFMLD</sequence>
<keyword id="KW-0413">Isomerase</keyword>
<keyword id="KW-1185">Reference proteome</keyword>
<keyword id="KW-0819">tRNA processing</keyword>
<protein>
    <recommendedName>
        <fullName evidence="1">tRNA pseudouridine synthase A</fullName>
        <ecNumber evidence="1">5.4.99.12</ecNumber>
    </recommendedName>
    <alternativeName>
        <fullName evidence="1">tRNA pseudouridine(38-40) synthase</fullName>
    </alternativeName>
    <alternativeName>
        <fullName evidence="1">tRNA pseudouridylate synthase I</fullName>
    </alternativeName>
    <alternativeName>
        <fullName evidence="1">tRNA-uridine isomerase I</fullName>
    </alternativeName>
</protein>
<feature type="chain" id="PRO_1000017169" description="tRNA pseudouridine synthase A">
    <location>
        <begin position="1"/>
        <end position="261"/>
    </location>
</feature>
<feature type="active site" description="Nucleophile" evidence="1">
    <location>
        <position position="51"/>
    </location>
</feature>
<feature type="binding site" evidence="1">
    <location>
        <position position="109"/>
    </location>
    <ligand>
        <name>substrate</name>
    </ligand>
</feature>
<reference key="1">
    <citation type="submission" date="2007-03" db="EMBL/GenBank/DDBJ databases">
        <title>Complete sequence of Shewanella loihica PV-4.</title>
        <authorList>
            <consortium name="US DOE Joint Genome Institute"/>
            <person name="Copeland A."/>
            <person name="Lucas S."/>
            <person name="Lapidus A."/>
            <person name="Barry K."/>
            <person name="Detter J.C."/>
            <person name="Glavina del Rio T."/>
            <person name="Hammon N."/>
            <person name="Israni S."/>
            <person name="Dalin E."/>
            <person name="Tice H."/>
            <person name="Pitluck S."/>
            <person name="Chain P."/>
            <person name="Malfatti S."/>
            <person name="Shin M."/>
            <person name="Vergez L."/>
            <person name="Schmutz J."/>
            <person name="Larimer F."/>
            <person name="Land M."/>
            <person name="Hauser L."/>
            <person name="Kyrpides N."/>
            <person name="Mikhailova N."/>
            <person name="Romine M.F."/>
            <person name="Serres G."/>
            <person name="Fredrickson J."/>
            <person name="Tiedje J."/>
            <person name="Richardson P."/>
        </authorList>
    </citation>
    <scope>NUCLEOTIDE SEQUENCE [LARGE SCALE GENOMIC DNA]</scope>
    <source>
        <strain>ATCC BAA-1088 / PV-4</strain>
    </source>
</reference>
<dbReference type="EC" id="5.4.99.12" evidence="1"/>
<dbReference type="EMBL" id="CP000606">
    <property type="protein sequence ID" value="ABO24172.1"/>
    <property type="molecule type" value="Genomic_DNA"/>
</dbReference>
<dbReference type="RefSeq" id="WP_011866103.1">
    <property type="nucleotide sequence ID" value="NC_009092.1"/>
</dbReference>
<dbReference type="SMR" id="A3QFC4"/>
<dbReference type="STRING" id="323850.Shew_2306"/>
<dbReference type="KEGG" id="slo:Shew_2306"/>
<dbReference type="eggNOG" id="COG0101">
    <property type="taxonomic scope" value="Bacteria"/>
</dbReference>
<dbReference type="HOGENOM" id="CLU_014673_0_2_6"/>
<dbReference type="OrthoDB" id="9811823at2"/>
<dbReference type="Proteomes" id="UP000001558">
    <property type="component" value="Chromosome"/>
</dbReference>
<dbReference type="GO" id="GO:0003723">
    <property type="term" value="F:RNA binding"/>
    <property type="evidence" value="ECO:0007669"/>
    <property type="project" value="InterPro"/>
</dbReference>
<dbReference type="GO" id="GO:0160147">
    <property type="term" value="F:tRNA pseudouridine(38-40) synthase activity"/>
    <property type="evidence" value="ECO:0007669"/>
    <property type="project" value="UniProtKB-EC"/>
</dbReference>
<dbReference type="GO" id="GO:0031119">
    <property type="term" value="P:tRNA pseudouridine synthesis"/>
    <property type="evidence" value="ECO:0007669"/>
    <property type="project" value="UniProtKB-UniRule"/>
</dbReference>
<dbReference type="CDD" id="cd02570">
    <property type="entry name" value="PseudoU_synth_EcTruA"/>
    <property type="match status" value="1"/>
</dbReference>
<dbReference type="FunFam" id="3.30.70.580:FF:000001">
    <property type="entry name" value="tRNA pseudouridine synthase A"/>
    <property type="match status" value="1"/>
</dbReference>
<dbReference type="FunFam" id="3.30.70.660:FF:000001">
    <property type="entry name" value="tRNA pseudouridine synthase A"/>
    <property type="match status" value="1"/>
</dbReference>
<dbReference type="Gene3D" id="3.30.70.660">
    <property type="entry name" value="Pseudouridine synthase I, catalytic domain, C-terminal subdomain"/>
    <property type="match status" value="1"/>
</dbReference>
<dbReference type="Gene3D" id="3.30.70.580">
    <property type="entry name" value="Pseudouridine synthase I, catalytic domain, N-terminal subdomain"/>
    <property type="match status" value="1"/>
</dbReference>
<dbReference type="HAMAP" id="MF_00171">
    <property type="entry name" value="TruA"/>
    <property type="match status" value="1"/>
</dbReference>
<dbReference type="InterPro" id="IPR020103">
    <property type="entry name" value="PsdUridine_synth_cat_dom_sf"/>
</dbReference>
<dbReference type="InterPro" id="IPR001406">
    <property type="entry name" value="PsdUridine_synth_TruA"/>
</dbReference>
<dbReference type="InterPro" id="IPR020097">
    <property type="entry name" value="PsdUridine_synth_TruA_a/b_dom"/>
</dbReference>
<dbReference type="InterPro" id="IPR020095">
    <property type="entry name" value="PsdUridine_synth_TruA_C"/>
</dbReference>
<dbReference type="InterPro" id="IPR020094">
    <property type="entry name" value="TruA/RsuA/RluB/E/F_N"/>
</dbReference>
<dbReference type="NCBIfam" id="TIGR00071">
    <property type="entry name" value="hisT_truA"/>
    <property type="match status" value="1"/>
</dbReference>
<dbReference type="PANTHER" id="PTHR11142">
    <property type="entry name" value="PSEUDOURIDYLATE SYNTHASE"/>
    <property type="match status" value="1"/>
</dbReference>
<dbReference type="PANTHER" id="PTHR11142:SF0">
    <property type="entry name" value="TRNA PSEUDOURIDINE SYNTHASE-LIKE 1"/>
    <property type="match status" value="1"/>
</dbReference>
<dbReference type="Pfam" id="PF01416">
    <property type="entry name" value="PseudoU_synth_1"/>
    <property type="match status" value="2"/>
</dbReference>
<dbReference type="PIRSF" id="PIRSF001430">
    <property type="entry name" value="tRNA_psdUrid_synth"/>
    <property type="match status" value="1"/>
</dbReference>
<dbReference type="SUPFAM" id="SSF55120">
    <property type="entry name" value="Pseudouridine synthase"/>
    <property type="match status" value="1"/>
</dbReference>
<name>TRUA_SHELP</name>
<gene>
    <name evidence="1" type="primary">truA</name>
    <name type="ordered locus">Shew_2306</name>
</gene>
<accession>A3QFC4</accession>